<reference key="1">
    <citation type="journal article" date="1998" name="Science">
        <title>Genome sequence of the nematode C. elegans: a platform for investigating biology.</title>
        <authorList>
            <consortium name="The C. elegans sequencing consortium"/>
        </authorList>
    </citation>
    <scope>NUCLEOTIDE SEQUENCE [LARGE SCALE GENOMIC DNA]</scope>
    <source>
        <strain>Bristol N2</strain>
    </source>
</reference>
<reference key="2">
    <citation type="journal article" date="2011" name="Mol. Biol. Cell">
        <title>The Caenorhabditis elegans GARP complex contains the conserved Vps51 subunit and is required to maintain lysosomal morphology.</title>
        <authorList>
            <person name="Luo L."/>
            <person name="Hannemann M."/>
            <person name="Koenig S."/>
            <person name="Hegermann J."/>
            <person name="Ailion M."/>
            <person name="Cho M.K."/>
            <person name="Sasidharan N."/>
            <person name="Zweckstetter M."/>
            <person name="Rensing S.A."/>
            <person name="Eimer S."/>
        </authorList>
    </citation>
    <scope>INTERACTION WITH VPS-52</scope>
    <scope>SUBCELLULAR LOCATION</scope>
</reference>
<reference key="3">
    <citation type="journal article" date="2012" name="J. Cell Biol.">
        <title>RAB-6.2 and the retromer regulate glutamate receptor recycling through a retrograde pathway.</title>
        <authorList>
            <person name="Zhang D."/>
            <person name="Isack N.R."/>
            <person name="Glodowski D.R."/>
            <person name="Liu J."/>
            <person name="Chen C.C."/>
            <person name="Xu X.Z."/>
            <person name="Grant B.D."/>
            <person name="Rongo C."/>
        </authorList>
    </citation>
    <scope>FUNCTION</scope>
    <scope>INTERACTION WITH LIN-10</scope>
    <scope>SUBCELLULAR LOCATION</scope>
    <scope>TISSUE SPECIFICITY</scope>
    <scope>DISRUPTION PHENOTYPE</scope>
    <scope>MUTAGENESIS OF THR-24 AND GLN-69</scope>
</reference>
<reference key="4">
    <citation type="journal article" date="2012" name="J. Cell Sci.">
        <title>Rab6 is required for the exocytosis of cortical granules and the recruitment of separase to the granules during the oocyte-to-embryo transition in Caenorhabditis elegans.</title>
        <authorList>
            <person name="Kimura K."/>
            <person name="Kimura A."/>
        </authorList>
    </citation>
    <scope>FUNCTION</scope>
    <scope>SUBCELLULAR LOCATION</scope>
</reference>
<reference key="5">
    <citation type="journal article" date="2013" name="Genetics">
        <title>The jaw of the worm: GTPase-activating protein EAT-17 regulates grinder formation in Caenorhabditis elegans.</title>
        <authorList>
            <person name="Straud S."/>
            <person name="Lee I."/>
            <person name="Song B."/>
            <person name="Avery L."/>
            <person name="You Y.J."/>
        </authorList>
    </citation>
    <scope>FUNCTION</scope>
    <scope>INTERACTION WITH EAT-17</scope>
    <scope>TISSUE SPECIFICITY</scope>
    <scope>DISRUPTION PHENOTYPE</scope>
    <scope>MUTAGENESIS OF THR-24</scope>
</reference>
<reference key="6">
    <citation type="journal article" date="2016" name="PLoS ONE">
        <title>RAB-6.1 and RAB-6.2 Promote Retrograde Transport in C. elegans.</title>
        <authorList>
            <person name="Zhang D."/>
            <person name="Dubey J."/>
            <person name="Koushika S.P."/>
            <person name="Rongo C."/>
        </authorList>
    </citation>
    <scope>FUNCTION</scope>
    <scope>SUBCELLULAR LOCATION</scope>
    <scope>DISRUPTION PHENOTYPE</scope>
</reference>
<reference key="7">
    <citation type="journal article" date="2019" name="J. Cell Sci.">
        <title>A conserved retromer-independent function for RAB-6.2 in C. elegans epidermis integrity.</title>
        <authorList>
            <person name="Kim J.D."/>
            <person name="Chun A.Y."/>
            <person name="Mangan R.J."/>
            <person name="Brown G."/>
            <person name="Mourao Pacheco B."/>
            <person name="Doyle H."/>
            <person name="Leonard A."/>
            <person name="El Bejjani R."/>
        </authorList>
    </citation>
    <scope>FUNCTION</scope>
    <scope>DISRUPTION PHENOTYPE</scope>
</reference>
<reference key="8">
    <citation type="journal article" date="2021" name="PLoS Genet.">
        <title>The RabGAP TBC-11 controls Argonaute localization for proper microRNA function in C. elegans.</title>
        <authorList>
            <person name="Michaud P."/>
            <person name="Shah V.N."/>
            <person name="Adjibade P."/>
            <person name="Houle F."/>
            <person name="Quevillon Huberdeau M."/>
            <person name="Rioux R."/>
            <person name="Lavoie-Ouellet C."/>
            <person name="Gu W."/>
            <person name="Mazroui R."/>
            <person name="Simard M.J."/>
        </authorList>
    </citation>
    <scope>FUNCTION</scope>
    <scope>DISRUPTION PHENOTYPE</scope>
</reference>
<dbReference type="EMBL" id="BX284606">
    <property type="protein sequence ID" value="CCD74453.1"/>
    <property type="molecule type" value="Genomic_DNA"/>
</dbReference>
<dbReference type="PIR" id="T34375">
    <property type="entry name" value="T34375"/>
</dbReference>
<dbReference type="RefSeq" id="NP_510790.1">
    <property type="nucleotide sequence ID" value="NM_078389.7"/>
</dbReference>
<dbReference type="SMR" id="Q22782"/>
<dbReference type="BioGRID" id="46636">
    <property type="interactions" value="7"/>
</dbReference>
<dbReference type="FunCoup" id="Q22782">
    <property type="interactions" value="1953"/>
</dbReference>
<dbReference type="IntAct" id="Q22782">
    <property type="interactions" value="3"/>
</dbReference>
<dbReference type="STRING" id="6239.T25G12.4.1"/>
<dbReference type="PaxDb" id="6239-T25G12.4"/>
<dbReference type="EnsemblMetazoa" id="T25G12.4.1">
    <property type="protein sequence ID" value="T25G12.4.1"/>
    <property type="gene ID" value="WBGene00004270"/>
</dbReference>
<dbReference type="GeneID" id="181759"/>
<dbReference type="KEGG" id="cel:CELE_T25G12.4"/>
<dbReference type="UCSC" id="T25G12.4">
    <property type="organism name" value="c. elegans"/>
</dbReference>
<dbReference type="AGR" id="WB:WBGene00004270"/>
<dbReference type="CTD" id="181759"/>
<dbReference type="WormBase" id="T25G12.4">
    <property type="protein sequence ID" value="CE07541"/>
    <property type="gene ID" value="WBGene00004270"/>
    <property type="gene designation" value="rab-6.2"/>
</dbReference>
<dbReference type="eggNOG" id="KOG0094">
    <property type="taxonomic scope" value="Eukaryota"/>
</dbReference>
<dbReference type="GeneTree" id="ENSGT00940000159656"/>
<dbReference type="HOGENOM" id="CLU_041217_10_2_1"/>
<dbReference type="InParanoid" id="Q22782"/>
<dbReference type="OMA" id="NCFFRET"/>
<dbReference type="OrthoDB" id="63533at2759"/>
<dbReference type="PhylomeDB" id="Q22782"/>
<dbReference type="Reactome" id="R-CEL-6798695">
    <property type="pathway name" value="Neutrophil degranulation"/>
</dbReference>
<dbReference type="Reactome" id="R-CEL-6811436">
    <property type="pathway name" value="COPI-independent Golgi-to-ER retrograde traffic"/>
</dbReference>
<dbReference type="Reactome" id="R-CEL-6811438">
    <property type="pathway name" value="Intra-Golgi traffic"/>
</dbReference>
<dbReference type="Reactome" id="R-CEL-6811440">
    <property type="pathway name" value="Retrograde transport at the Trans-Golgi-Network"/>
</dbReference>
<dbReference type="Reactome" id="R-CEL-8854214">
    <property type="pathway name" value="TBC/RABGAPs"/>
</dbReference>
<dbReference type="Reactome" id="R-CEL-8873719">
    <property type="pathway name" value="RAB geranylgeranylation"/>
</dbReference>
<dbReference type="Reactome" id="R-CEL-8876198">
    <property type="pathway name" value="RAB GEFs exchange GTP for GDP on RABs"/>
</dbReference>
<dbReference type="SignaLink" id="Q22782"/>
<dbReference type="PRO" id="PR:Q22782"/>
<dbReference type="Proteomes" id="UP000001940">
    <property type="component" value="Chromosome X"/>
</dbReference>
<dbReference type="Bgee" id="WBGene00004270">
    <property type="expression patterns" value="Expressed in pharyngeal muscle cell (C elegans) and 3 other cell types or tissues"/>
</dbReference>
<dbReference type="GO" id="GO:0031410">
    <property type="term" value="C:cytoplasmic vesicle"/>
    <property type="evidence" value="ECO:0007669"/>
    <property type="project" value="UniProtKB-KW"/>
</dbReference>
<dbReference type="GO" id="GO:0005829">
    <property type="term" value="C:cytosol"/>
    <property type="evidence" value="ECO:0007669"/>
    <property type="project" value="GOC"/>
</dbReference>
<dbReference type="GO" id="GO:0030425">
    <property type="term" value="C:dendrite"/>
    <property type="evidence" value="ECO:0007669"/>
    <property type="project" value="UniProtKB-SubCell"/>
</dbReference>
<dbReference type="GO" id="GO:0012505">
    <property type="term" value="C:endomembrane system"/>
    <property type="evidence" value="ECO:0000318"/>
    <property type="project" value="GO_Central"/>
</dbReference>
<dbReference type="GO" id="GO:0005794">
    <property type="term" value="C:Golgi apparatus"/>
    <property type="evidence" value="ECO:0000318"/>
    <property type="project" value="GO_Central"/>
</dbReference>
<dbReference type="GO" id="GO:0031985">
    <property type="term" value="C:Golgi cisterna"/>
    <property type="evidence" value="ECO:0000314"/>
    <property type="project" value="WormBase"/>
</dbReference>
<dbReference type="GO" id="GO:0000138">
    <property type="term" value="C:Golgi trans cisterna"/>
    <property type="evidence" value="ECO:0000314"/>
    <property type="project" value="WormBase"/>
</dbReference>
<dbReference type="GO" id="GO:0043204">
    <property type="term" value="C:perikaryon"/>
    <property type="evidence" value="ECO:0007669"/>
    <property type="project" value="UniProtKB-SubCell"/>
</dbReference>
<dbReference type="GO" id="GO:0005525">
    <property type="term" value="F:GTP binding"/>
    <property type="evidence" value="ECO:0000315"/>
    <property type="project" value="UniProtKB"/>
</dbReference>
<dbReference type="GO" id="GO:0003924">
    <property type="term" value="F:GTPase activity"/>
    <property type="evidence" value="ECO:0000318"/>
    <property type="project" value="GO_Central"/>
</dbReference>
<dbReference type="GO" id="GO:0008344">
    <property type="term" value="P:adult locomotory behavior"/>
    <property type="evidence" value="ECO:0000315"/>
    <property type="project" value="UniProtKB"/>
</dbReference>
<dbReference type="GO" id="GO:0042335">
    <property type="term" value="P:cuticle development"/>
    <property type="evidence" value="ECO:0000315"/>
    <property type="project" value="UniProtKB"/>
</dbReference>
<dbReference type="GO" id="GO:0034498">
    <property type="term" value="P:early endosome to Golgi transport"/>
    <property type="evidence" value="ECO:0000315"/>
    <property type="project" value="UniProtKB"/>
</dbReference>
<dbReference type="GO" id="GO:0006891">
    <property type="term" value="P:intra-Golgi vesicle-mediated transport"/>
    <property type="evidence" value="ECO:0000318"/>
    <property type="project" value="GO_Central"/>
</dbReference>
<dbReference type="GO" id="GO:0006886">
    <property type="term" value="P:intracellular protein transport"/>
    <property type="evidence" value="ECO:0000318"/>
    <property type="project" value="GO_Central"/>
</dbReference>
<dbReference type="GO" id="GO:0007638">
    <property type="term" value="P:mechanosensory behavior"/>
    <property type="evidence" value="ECO:0000315"/>
    <property type="project" value="UniProtKB"/>
</dbReference>
<dbReference type="GO" id="GO:2000253">
    <property type="term" value="P:positive regulation of feeding behavior"/>
    <property type="evidence" value="ECO:0000315"/>
    <property type="project" value="UniProtKB"/>
</dbReference>
<dbReference type="GO" id="GO:0008104">
    <property type="term" value="P:protein localization"/>
    <property type="evidence" value="ECO:0000315"/>
    <property type="project" value="UniProtKB"/>
</dbReference>
<dbReference type="GO" id="GO:1903539">
    <property type="term" value="P:protein localization to postsynaptic membrane"/>
    <property type="evidence" value="ECO:0000315"/>
    <property type="project" value="UniProtKB"/>
</dbReference>
<dbReference type="GO" id="GO:0050821">
    <property type="term" value="P:protein stabilization"/>
    <property type="evidence" value="ECO:0000315"/>
    <property type="project" value="UniProtKB"/>
</dbReference>
<dbReference type="GO" id="GO:2000311">
    <property type="term" value="P:regulation of AMPA receptor activity"/>
    <property type="evidence" value="ECO:0000315"/>
    <property type="project" value="UniProtKB"/>
</dbReference>
<dbReference type="GO" id="GO:0042147">
    <property type="term" value="P:retrograde transport, endosome to Golgi"/>
    <property type="evidence" value="ECO:0000318"/>
    <property type="project" value="GO_Central"/>
</dbReference>
<dbReference type="GO" id="GO:0006890">
    <property type="term" value="P:retrograde vesicle-mediated transport, Golgi to endoplasmic reticulum"/>
    <property type="evidence" value="ECO:0000318"/>
    <property type="project" value="GO_Central"/>
</dbReference>
<dbReference type="CDD" id="cd01861">
    <property type="entry name" value="Rab6"/>
    <property type="match status" value="1"/>
</dbReference>
<dbReference type="FunFam" id="3.40.50.300:FF:000139">
    <property type="entry name" value="ras-related protein Rab-6A isoform X1"/>
    <property type="match status" value="1"/>
</dbReference>
<dbReference type="Gene3D" id="3.40.50.300">
    <property type="entry name" value="P-loop containing nucleotide triphosphate hydrolases"/>
    <property type="match status" value="1"/>
</dbReference>
<dbReference type="InterPro" id="IPR027417">
    <property type="entry name" value="P-loop_NTPase"/>
</dbReference>
<dbReference type="InterPro" id="IPR050227">
    <property type="entry name" value="Rab"/>
</dbReference>
<dbReference type="InterPro" id="IPR005225">
    <property type="entry name" value="Small_GTP-bd"/>
</dbReference>
<dbReference type="InterPro" id="IPR001806">
    <property type="entry name" value="Small_GTPase"/>
</dbReference>
<dbReference type="NCBIfam" id="TIGR00231">
    <property type="entry name" value="small_GTP"/>
    <property type="match status" value="1"/>
</dbReference>
<dbReference type="PANTHER" id="PTHR47977">
    <property type="entry name" value="RAS-RELATED PROTEIN RAB"/>
    <property type="match status" value="1"/>
</dbReference>
<dbReference type="Pfam" id="PF00071">
    <property type="entry name" value="Ras"/>
    <property type="match status" value="1"/>
</dbReference>
<dbReference type="PRINTS" id="PR00449">
    <property type="entry name" value="RASTRNSFRMNG"/>
</dbReference>
<dbReference type="SMART" id="SM00175">
    <property type="entry name" value="RAB"/>
    <property type="match status" value="1"/>
</dbReference>
<dbReference type="SMART" id="SM00176">
    <property type="entry name" value="RAN"/>
    <property type="match status" value="1"/>
</dbReference>
<dbReference type="SMART" id="SM00173">
    <property type="entry name" value="RAS"/>
    <property type="match status" value="1"/>
</dbReference>
<dbReference type="SMART" id="SM00174">
    <property type="entry name" value="RHO"/>
    <property type="match status" value="1"/>
</dbReference>
<dbReference type="SUPFAM" id="SSF52540">
    <property type="entry name" value="P-loop containing nucleoside triphosphate hydrolases"/>
    <property type="match status" value="1"/>
</dbReference>
<dbReference type="PROSITE" id="PS51419">
    <property type="entry name" value="RAB"/>
    <property type="match status" value="1"/>
</dbReference>
<organism>
    <name type="scientific">Caenorhabditis elegans</name>
    <dbReference type="NCBI Taxonomy" id="6239"/>
    <lineage>
        <taxon>Eukaryota</taxon>
        <taxon>Metazoa</taxon>
        <taxon>Ecdysozoa</taxon>
        <taxon>Nematoda</taxon>
        <taxon>Chromadorea</taxon>
        <taxon>Rhabditida</taxon>
        <taxon>Rhabditina</taxon>
        <taxon>Rhabditomorpha</taxon>
        <taxon>Rhabditoidea</taxon>
        <taxon>Rhabditidae</taxon>
        <taxon>Peloderinae</taxon>
        <taxon>Caenorhabditis</taxon>
    </lineage>
</organism>
<protein>
    <recommendedName>
        <fullName>Ras-related protein rab-6.2</fullName>
    </recommendedName>
</protein>
<gene>
    <name evidence="10" type="primary">rab-6.2</name>
    <name evidence="10" type="ORF">T25G12.4</name>
</gene>
<sequence length="205" mass="23365">MSDFGNPLKKFKLVFLGEQSVGKTSLITRFMYDSFDNTYQATIGIDFLSKTMYLEDRTVRLQLWDTAGQERFRSLIPSYIRDSTVAVVVYDITNSNSFHQTSKWIDDVRTERGSDVIIMLVGNKTDLSDKRQVTTDEGERKAKELNVMFIETSAKAGYNVKQLFRRIAGALPGIIKDDPVEPPNVVTMDPIRQRQIVTDEGSCWC</sequence>
<keyword id="KW-0966">Cell projection</keyword>
<keyword id="KW-0968">Cytoplasmic vesicle</keyword>
<keyword id="KW-0333">Golgi apparatus</keyword>
<keyword id="KW-0342">GTP-binding</keyword>
<keyword id="KW-0449">Lipoprotein</keyword>
<keyword id="KW-0488">Methylation</keyword>
<keyword id="KW-0547">Nucleotide-binding</keyword>
<keyword id="KW-0636">Prenylation</keyword>
<keyword id="KW-0653">Protein transport</keyword>
<keyword id="KW-1185">Reference proteome</keyword>
<keyword id="KW-0813">Transport</keyword>
<accession>Q22782</accession>
<feature type="chain" id="PRO_0000121119" description="Ras-related protein rab-6.2">
    <location>
        <begin position="1"/>
        <end position="205"/>
    </location>
</feature>
<feature type="binding site" evidence="1">
    <location>
        <begin position="18"/>
        <end position="25"/>
    </location>
    <ligand>
        <name>GTP</name>
        <dbReference type="ChEBI" id="CHEBI:37565"/>
    </ligand>
</feature>
<feature type="binding site" evidence="1">
    <location>
        <position position="42"/>
    </location>
    <ligand>
        <name>GTP</name>
        <dbReference type="ChEBI" id="CHEBI:37565"/>
    </ligand>
</feature>
<feature type="binding site" evidence="1">
    <location>
        <begin position="66"/>
        <end position="70"/>
    </location>
    <ligand>
        <name>GTP</name>
        <dbReference type="ChEBI" id="CHEBI:37565"/>
    </ligand>
</feature>
<feature type="binding site" evidence="1">
    <location>
        <begin position="124"/>
        <end position="127"/>
    </location>
    <ligand>
        <name>GTP</name>
        <dbReference type="ChEBI" id="CHEBI:37565"/>
    </ligand>
</feature>
<feature type="modified residue" description="Cysteine methyl ester" evidence="1">
    <location>
        <position position="205"/>
    </location>
</feature>
<feature type="lipid moiety-binding region" description="S-geranylgeranyl cysteine" evidence="1">
    <location>
        <position position="203"/>
    </location>
</feature>
<feature type="lipid moiety-binding region" description="S-geranylgeranyl cysteine" evidence="1">
    <location>
        <position position="205"/>
    </location>
</feature>
<feature type="mutagenesis site" description="Constitutively inactive (GDP-locked form). May abolishes interaction with eat-17. Diffusely distributed in the dendrites and cell body cytosol of neurons. Disrupts the punctate localization of lin-10." evidence="3 5">
    <original>T</original>
    <variation>N</variation>
    <location>
        <position position="24"/>
    </location>
</feature>
<feature type="mutagenesis site" description="Constitutively active (GTP-locked form). Reduces spontaneous reversal rate and mechanosensitivity. Punctate localization in the dendrites and cell body cytosol of neurons as in wild-type. Promotes the punctate localization of lin-10. Few glr-1-positive ventral cord puncta accumulate, but several large glr-1-positive puncta accumulate in neuron cell bodies. This is suppressed in a unc-11 e47 mutant background." evidence="3">
    <original>Q</original>
    <variation>L</variation>
    <location>
        <position position="69"/>
    </location>
</feature>
<proteinExistence type="evidence at protein level"/>
<evidence type="ECO:0000250" key="1"/>
<evidence type="ECO:0000269" key="2">
    <source>
    </source>
</evidence>
<evidence type="ECO:0000269" key="3">
    <source>
    </source>
</evidence>
<evidence type="ECO:0000269" key="4">
    <source>
    </source>
</evidence>
<evidence type="ECO:0000269" key="5">
    <source>
    </source>
</evidence>
<evidence type="ECO:0000269" key="6">
    <source>
    </source>
</evidence>
<evidence type="ECO:0000269" key="7">
    <source>
    </source>
</evidence>
<evidence type="ECO:0000269" key="8">
    <source>
    </source>
</evidence>
<evidence type="ECO:0000305" key="9"/>
<evidence type="ECO:0000312" key="10">
    <source>
        <dbReference type="WormBase" id="T25G12.4"/>
    </source>
</evidence>
<name>RAB6B_CAEEL</name>
<comment type="function">
    <text evidence="3 4 5 6 7 8">The small GTPases Rab are key regulators of intracellular membrane trafficking, from the formation of transport vesicles to their fusion with membranes (PubMed:22213799). Rabs cycle between an inactive GDP-bound form and an active GTP-bound form that is able to recruit to membranes different set of downstream effectors directly responsible for vesicle formation, movement, tethering and fusion (PubMed:22213799). In its active GTP-bound form, acts redundantly with rab-6.1 (in its active GTP-bound form) to positively regulate the retrograde trafficking of cargo molecules from endosomes to the Golgi compartment (PubMed:22213799, PubMed:26891225). Required for the retrograde trafficking of glr-1, a subunit of AMPA-type glutamate receptors (AMPRs), out of early endosomes and into the Golgi compartment in neurons (PubMed:22213799, PubMed:26891225). Its role in glr-1 trafficking may partly be mediated by its interaction with lin-10 and association with components of the retromer complex such as rme-8 (PubMed:22213799). Together with rab-6.2, promotes the retrograde trafficking of mig-14 from endosomes to Golgi structures in the intestine (PubMed:26891225). Plays a role in the epidermis to promote cuticle integrity and impermeability of the cuticle barrier to exogenous molecules (PubMed:30665892). May have a role in the glycosylation of the cuticular surface (PubMed:30665892). Required for seam cell division and alae formation (PubMed:33826611). Required for grinder formation, which is the feeding organ that breaks down food (PubMed:23792950). In contrast to rab-6.1, may play a minor role in the exocytosis of secretory vesicles (cortical granules) during the oocyte-to-embryo transition (PubMed:22992455).</text>
</comment>
<comment type="subunit">
    <text evidence="2 3 5">Interacts with GARP complex component vps-52 (PubMed:21613545). Interacts (in GTP-bound form) with lin-10 (PubMed:22213799). May interact (in GTP-bound form) with eat-17 (PubMed:23792950).</text>
</comment>
<comment type="subcellular location">
    <subcellularLocation>
        <location evidence="3 6">Perikaryon</location>
    </subcellularLocation>
    <subcellularLocation>
        <location evidence="3 6">Cell projection</location>
        <location evidence="3 6">Dendrite</location>
    </subcellularLocation>
    <subcellularLocation>
        <location evidence="2 3 6">Golgi apparatus</location>
    </subcellularLocation>
    <subcellularLocation>
        <location evidence="4">Cytoplasmic vesicle</location>
    </subcellularLocation>
    <text evidence="2 3 4 6">Co-localizes with glr-1 at or near punctate structures in the neuron cell body and along the ventral cord dendrites (PubMed:22213799). Co-localizes with lin-10 in neuronal cell bodies (PubMed:22213799). Co-localizes with rme-8 in neuronal cell bodies and dendrites (PubMed:22213799). Co-localizes with rab-6.1 in neuronal cell bodies and dendrites and in Golgi structures in neurons and the intestine (PubMed:26891225). Co-localizes with vps-52 at Golgi structures (PubMed:21613545). Co-localizes with rab-6.1 at vesicular structures throughout the oocyte cytoplasm (PubMed:22992455).</text>
</comment>
<comment type="tissue specificity">
    <text evidence="3 5">Highly expressed in body wall muscles, pharyngeal and vulval muscles, hypodermis, intestine, the gonad, coelomocytes, and neurons, including command interneuron (at protein level) (PubMed:22213799). Highly expressed in the terminal bulb muscles (PubMed:23792950).</text>
</comment>
<comment type="disruption phenotype">
    <text evidence="3 5 6 7 8">Grinder formation defects, whereby the grinder is formed, but it is small (PubMed:23792950). Animals have a fragile cuticle phenotype, which is prone to rupturing at random positions along the body (PubMed:30665892). This phenotype is intensified in response to hypotonic shock (PubMed:30665892). Due to a compromised cuticle barrier, which increases permeability to exogenous chemicals, all animals become paralyzed in response to acetylcholine agonist tetramisole or the GABA agonist piperazine (PubMed:30665892). Resistant to infection by the bacterium M.nematophilum and does not exhibit a deformity at the anal region phenotype (also known as a dar phenotype), which is possibly indicative of cuticle glycosylation defects (PubMed:30665892). Reduces spontaneous reversal rate and mechanosensitivity (PubMed:22213799). Disrupts the localization of glr-1, and there is a decreased number of glr-1-positive puncta along the ventral cord dendrites (PubMed:22213799, PubMed:26891225). The reduced number of glr-1-positive puncta along the ventral cord dendrites phenotype is suppressed in an unc-11 e47 mutant background (PubMed:22213799). The number of glr-1-positive puncta is further reduced in a rab-6.1 RNAi-mediated knockdown in glr-1 expressing neurons (PubMed:26891225). RNAi-mediated knockdown results in delayed growth and grinder formation defects (PubMed:23792950). RNAi-mediated knockdown disrupts seam cell division and alae formation (PubMed:33826611). RNAi-mediated knockdown suppresses the seam cell division and alae formation defects in the tbc-11 ok2576 mutant (PubMed:33826611).</text>
</comment>
<comment type="similarity">
    <text evidence="9">Belongs to the small GTPase superfamily. Rab family.</text>
</comment>